<dbReference type="EC" id="3.6.5.3" evidence="2"/>
<dbReference type="EMBL" id="CP000776">
    <property type="protein sequence ID" value="ABS51169.1"/>
    <property type="molecule type" value="Genomic_DNA"/>
</dbReference>
<dbReference type="RefSeq" id="WP_012109494.1">
    <property type="nucleotide sequence ID" value="NC_009714.1"/>
</dbReference>
<dbReference type="SMR" id="A7I3U7"/>
<dbReference type="STRING" id="360107.CHAB381_1672"/>
<dbReference type="KEGG" id="cha:CHAB381_1672"/>
<dbReference type="eggNOG" id="COG0050">
    <property type="taxonomic scope" value="Bacteria"/>
</dbReference>
<dbReference type="HOGENOM" id="CLU_007265_0_2_7"/>
<dbReference type="OrthoDB" id="9803139at2"/>
<dbReference type="Proteomes" id="UP000002407">
    <property type="component" value="Chromosome"/>
</dbReference>
<dbReference type="GO" id="GO:0005829">
    <property type="term" value="C:cytosol"/>
    <property type="evidence" value="ECO:0007669"/>
    <property type="project" value="TreeGrafter"/>
</dbReference>
<dbReference type="GO" id="GO:0005525">
    <property type="term" value="F:GTP binding"/>
    <property type="evidence" value="ECO:0007669"/>
    <property type="project" value="UniProtKB-UniRule"/>
</dbReference>
<dbReference type="GO" id="GO:0003924">
    <property type="term" value="F:GTPase activity"/>
    <property type="evidence" value="ECO:0007669"/>
    <property type="project" value="InterPro"/>
</dbReference>
<dbReference type="GO" id="GO:0003746">
    <property type="term" value="F:translation elongation factor activity"/>
    <property type="evidence" value="ECO:0007669"/>
    <property type="project" value="UniProtKB-UniRule"/>
</dbReference>
<dbReference type="CDD" id="cd01884">
    <property type="entry name" value="EF_Tu"/>
    <property type="match status" value="1"/>
</dbReference>
<dbReference type="CDD" id="cd03697">
    <property type="entry name" value="EFTU_II"/>
    <property type="match status" value="1"/>
</dbReference>
<dbReference type="CDD" id="cd03707">
    <property type="entry name" value="EFTU_III"/>
    <property type="match status" value="1"/>
</dbReference>
<dbReference type="FunFam" id="2.40.30.10:FF:000001">
    <property type="entry name" value="Elongation factor Tu"/>
    <property type="match status" value="1"/>
</dbReference>
<dbReference type="FunFam" id="3.40.50.300:FF:000003">
    <property type="entry name" value="Elongation factor Tu"/>
    <property type="match status" value="1"/>
</dbReference>
<dbReference type="Gene3D" id="3.40.50.300">
    <property type="entry name" value="P-loop containing nucleotide triphosphate hydrolases"/>
    <property type="match status" value="1"/>
</dbReference>
<dbReference type="Gene3D" id="2.40.30.10">
    <property type="entry name" value="Translation factors"/>
    <property type="match status" value="2"/>
</dbReference>
<dbReference type="HAMAP" id="MF_00118_B">
    <property type="entry name" value="EF_Tu_B"/>
    <property type="match status" value="1"/>
</dbReference>
<dbReference type="InterPro" id="IPR041709">
    <property type="entry name" value="EF-Tu_GTP-bd"/>
</dbReference>
<dbReference type="InterPro" id="IPR050055">
    <property type="entry name" value="EF-Tu_GTPase"/>
</dbReference>
<dbReference type="InterPro" id="IPR004161">
    <property type="entry name" value="EFTu-like_2"/>
</dbReference>
<dbReference type="InterPro" id="IPR033720">
    <property type="entry name" value="EFTU_2"/>
</dbReference>
<dbReference type="InterPro" id="IPR031157">
    <property type="entry name" value="G_TR_CS"/>
</dbReference>
<dbReference type="InterPro" id="IPR027417">
    <property type="entry name" value="P-loop_NTPase"/>
</dbReference>
<dbReference type="InterPro" id="IPR005225">
    <property type="entry name" value="Small_GTP-bd"/>
</dbReference>
<dbReference type="InterPro" id="IPR000795">
    <property type="entry name" value="T_Tr_GTP-bd_dom"/>
</dbReference>
<dbReference type="InterPro" id="IPR009000">
    <property type="entry name" value="Transl_B-barrel_sf"/>
</dbReference>
<dbReference type="InterPro" id="IPR009001">
    <property type="entry name" value="Transl_elong_EF1A/Init_IF2_C"/>
</dbReference>
<dbReference type="InterPro" id="IPR004541">
    <property type="entry name" value="Transl_elong_EFTu/EF1A_bac/org"/>
</dbReference>
<dbReference type="InterPro" id="IPR004160">
    <property type="entry name" value="Transl_elong_EFTu/EF1A_C"/>
</dbReference>
<dbReference type="NCBIfam" id="TIGR00485">
    <property type="entry name" value="EF-Tu"/>
    <property type="match status" value="1"/>
</dbReference>
<dbReference type="NCBIfam" id="NF000766">
    <property type="entry name" value="PRK00049.1"/>
    <property type="match status" value="1"/>
</dbReference>
<dbReference type="NCBIfam" id="NF009372">
    <property type="entry name" value="PRK12735.1"/>
    <property type="match status" value="1"/>
</dbReference>
<dbReference type="NCBIfam" id="NF009373">
    <property type="entry name" value="PRK12736.1"/>
    <property type="match status" value="1"/>
</dbReference>
<dbReference type="NCBIfam" id="TIGR00231">
    <property type="entry name" value="small_GTP"/>
    <property type="match status" value="1"/>
</dbReference>
<dbReference type="PANTHER" id="PTHR43721:SF22">
    <property type="entry name" value="ELONGATION FACTOR TU, MITOCHONDRIAL"/>
    <property type="match status" value="1"/>
</dbReference>
<dbReference type="PANTHER" id="PTHR43721">
    <property type="entry name" value="ELONGATION FACTOR TU-RELATED"/>
    <property type="match status" value="1"/>
</dbReference>
<dbReference type="Pfam" id="PF00009">
    <property type="entry name" value="GTP_EFTU"/>
    <property type="match status" value="1"/>
</dbReference>
<dbReference type="Pfam" id="PF03144">
    <property type="entry name" value="GTP_EFTU_D2"/>
    <property type="match status" value="1"/>
</dbReference>
<dbReference type="Pfam" id="PF03143">
    <property type="entry name" value="GTP_EFTU_D3"/>
    <property type="match status" value="1"/>
</dbReference>
<dbReference type="PRINTS" id="PR00315">
    <property type="entry name" value="ELONGATNFCT"/>
</dbReference>
<dbReference type="SUPFAM" id="SSF50465">
    <property type="entry name" value="EF-Tu/eEF-1alpha/eIF2-gamma C-terminal domain"/>
    <property type="match status" value="1"/>
</dbReference>
<dbReference type="SUPFAM" id="SSF52540">
    <property type="entry name" value="P-loop containing nucleoside triphosphate hydrolases"/>
    <property type="match status" value="1"/>
</dbReference>
<dbReference type="SUPFAM" id="SSF50447">
    <property type="entry name" value="Translation proteins"/>
    <property type="match status" value="1"/>
</dbReference>
<dbReference type="PROSITE" id="PS00301">
    <property type="entry name" value="G_TR_1"/>
    <property type="match status" value="1"/>
</dbReference>
<dbReference type="PROSITE" id="PS51722">
    <property type="entry name" value="G_TR_2"/>
    <property type="match status" value="1"/>
</dbReference>
<protein>
    <recommendedName>
        <fullName evidence="2">Elongation factor Tu</fullName>
        <shortName evidence="2">EF-Tu</shortName>
        <ecNumber evidence="2">3.6.5.3</ecNumber>
    </recommendedName>
</protein>
<reference key="1">
    <citation type="submission" date="2007-07" db="EMBL/GenBank/DDBJ databases">
        <title>Complete genome sequence of Campylobacter hominis ATCC BAA-381, a commensal isolated from the human gastrointestinal tract.</title>
        <authorList>
            <person name="Fouts D.E."/>
            <person name="Mongodin E.F."/>
            <person name="Puiu D."/>
            <person name="Sebastian Y."/>
            <person name="Miller W.G."/>
            <person name="Mandrell R.E."/>
            <person name="Nelson K.E."/>
        </authorList>
    </citation>
    <scope>NUCLEOTIDE SEQUENCE [LARGE SCALE GENOMIC DNA]</scope>
    <source>
        <strain>ATCC BAA-381 / DSM 21671 / CCUG 45161 / LMG 19568 / NCTC 13146 / CH001A</strain>
    </source>
</reference>
<sequence length="399" mass="43653">MAKEKYNRTKPHVNIGTIGHVDHGKTTLTAAISAVLSRKGLAELKDYSNIDNAPEEKERGITIATSHIEYETEKRHYAHVDCPGHADYVKNMITGAAQMDGAILVIASTDGPMAQTREHILLARQVGVPYIVVFLNKTDMVDDPELIELVEEEVKDLLKEYGFPGDEIPIIKGSALKALEEAKAGGDGEWSAKIMELMDAVDSYIPTPKRDTDKDFLMPIEDIFSISGRGTVVTGRVEKGIVKVGDTVELVGIKPTQTTTVTGVEMFRKELDEGEAGDNVGVLLRGTAKEDVERGMVLAKPKSITPHTKFEAEVYILTKEEGGRHTPFFNNYRPQFYVRTTDVTGSIQLPEGTEMVMPGDNVKITVELIHPIALEQGTRFAIREGGHTVGSGVVSKILG</sequence>
<name>EFTU_CAMHC</name>
<proteinExistence type="inferred from homology"/>
<comment type="function">
    <text evidence="2">GTP hydrolase that promotes the GTP-dependent binding of aminoacyl-tRNA to the A-site of ribosomes during protein biosynthesis.</text>
</comment>
<comment type="catalytic activity">
    <reaction evidence="2">
        <text>GTP + H2O = GDP + phosphate + H(+)</text>
        <dbReference type="Rhea" id="RHEA:19669"/>
        <dbReference type="ChEBI" id="CHEBI:15377"/>
        <dbReference type="ChEBI" id="CHEBI:15378"/>
        <dbReference type="ChEBI" id="CHEBI:37565"/>
        <dbReference type="ChEBI" id="CHEBI:43474"/>
        <dbReference type="ChEBI" id="CHEBI:58189"/>
        <dbReference type="EC" id="3.6.5.3"/>
    </reaction>
    <physiologicalReaction direction="left-to-right" evidence="2">
        <dbReference type="Rhea" id="RHEA:19670"/>
    </physiologicalReaction>
</comment>
<comment type="subunit">
    <text evidence="2">Monomer.</text>
</comment>
<comment type="subcellular location">
    <subcellularLocation>
        <location evidence="2">Cytoplasm</location>
    </subcellularLocation>
</comment>
<comment type="similarity">
    <text evidence="2">Belongs to the TRAFAC class translation factor GTPase superfamily. Classic translation factor GTPase family. EF-Tu/EF-1A subfamily.</text>
</comment>
<feature type="chain" id="PRO_1000015629" description="Elongation factor Tu">
    <location>
        <begin position="1"/>
        <end position="399"/>
    </location>
</feature>
<feature type="domain" description="tr-type G">
    <location>
        <begin position="10"/>
        <end position="209"/>
    </location>
</feature>
<feature type="region of interest" description="G1" evidence="1">
    <location>
        <begin position="19"/>
        <end position="26"/>
    </location>
</feature>
<feature type="region of interest" description="G2" evidence="1">
    <location>
        <begin position="60"/>
        <end position="64"/>
    </location>
</feature>
<feature type="region of interest" description="G3" evidence="1">
    <location>
        <begin position="81"/>
        <end position="84"/>
    </location>
</feature>
<feature type="region of interest" description="G4" evidence="1">
    <location>
        <begin position="136"/>
        <end position="139"/>
    </location>
</feature>
<feature type="region of interest" description="G5" evidence="1">
    <location>
        <begin position="174"/>
        <end position="176"/>
    </location>
</feature>
<feature type="binding site" evidence="2">
    <location>
        <begin position="19"/>
        <end position="26"/>
    </location>
    <ligand>
        <name>GTP</name>
        <dbReference type="ChEBI" id="CHEBI:37565"/>
    </ligand>
</feature>
<feature type="binding site" evidence="2">
    <location>
        <position position="26"/>
    </location>
    <ligand>
        <name>Mg(2+)</name>
        <dbReference type="ChEBI" id="CHEBI:18420"/>
    </ligand>
</feature>
<feature type="binding site" evidence="2">
    <location>
        <begin position="81"/>
        <end position="85"/>
    </location>
    <ligand>
        <name>GTP</name>
        <dbReference type="ChEBI" id="CHEBI:37565"/>
    </ligand>
</feature>
<feature type="binding site" evidence="2">
    <location>
        <begin position="136"/>
        <end position="139"/>
    </location>
    <ligand>
        <name>GTP</name>
        <dbReference type="ChEBI" id="CHEBI:37565"/>
    </ligand>
</feature>
<organism>
    <name type="scientific">Campylobacter hominis (strain ATCC BAA-381 / DSM 21671 / CCUG 45161 / LMG 19568 / NCTC 13146 / CH001A)</name>
    <dbReference type="NCBI Taxonomy" id="360107"/>
    <lineage>
        <taxon>Bacteria</taxon>
        <taxon>Pseudomonadati</taxon>
        <taxon>Campylobacterota</taxon>
        <taxon>Epsilonproteobacteria</taxon>
        <taxon>Campylobacterales</taxon>
        <taxon>Campylobacteraceae</taxon>
        <taxon>Campylobacter</taxon>
    </lineage>
</organism>
<gene>
    <name evidence="2" type="primary">tuf</name>
    <name type="ordered locus">CHAB381_1672</name>
</gene>
<evidence type="ECO:0000250" key="1"/>
<evidence type="ECO:0000255" key="2">
    <source>
        <dbReference type="HAMAP-Rule" id="MF_00118"/>
    </source>
</evidence>
<keyword id="KW-0963">Cytoplasm</keyword>
<keyword id="KW-0251">Elongation factor</keyword>
<keyword id="KW-0342">GTP-binding</keyword>
<keyword id="KW-0378">Hydrolase</keyword>
<keyword id="KW-0460">Magnesium</keyword>
<keyword id="KW-0479">Metal-binding</keyword>
<keyword id="KW-0547">Nucleotide-binding</keyword>
<keyword id="KW-0648">Protein biosynthesis</keyword>
<keyword id="KW-1185">Reference proteome</keyword>
<accession>A7I3U7</accession>